<evidence type="ECO:0000255" key="1">
    <source>
        <dbReference type="HAMAP-Rule" id="MF_00831"/>
    </source>
</evidence>
<protein>
    <recommendedName>
        <fullName evidence="1">3-aminoacrylate deaminase RutC</fullName>
        <shortName evidence="1">3-AA deaminase</shortName>
        <ecNumber evidence="1">3.5.-.-</ecNumber>
    </recommendedName>
</protein>
<comment type="function">
    <text evidence="1">Involved in pyrimidine catabolism. Catalyzes the deamination of 3-aminoacrylate to malonic semialdehyde, a reaction that can also occur spontaneously. RutC may facilitate the reaction and modulate the metabolic fitness, rather than catalyzing essential functions.</text>
</comment>
<comment type="catalytic activity">
    <reaction evidence="1">
        <text>(Z)-3-aminoacrylate + H2O + H(+) = 3-oxopropanoate + NH4(+)</text>
        <dbReference type="Rhea" id="RHEA:34947"/>
        <dbReference type="ChEBI" id="CHEBI:15377"/>
        <dbReference type="ChEBI" id="CHEBI:15378"/>
        <dbReference type="ChEBI" id="CHEBI:28938"/>
        <dbReference type="ChEBI" id="CHEBI:33190"/>
        <dbReference type="ChEBI" id="CHEBI:59894"/>
    </reaction>
</comment>
<comment type="similarity">
    <text evidence="1">Belongs to the RutC family.</text>
</comment>
<sequence length="129" mass="13812">MPKTVITPPGTGTPIAPFSPGTLADGIVYVSGTLAFDKDNNVAFPGDAEAQTRQVLETIKSVIETAGGTMEDVVMNHIFLTDWVHYAPMNKVYAEYFPGDKPARYCIQCGLVKPGFVVEIASVAHIGKP</sequence>
<organism>
    <name type="scientific">Caulobacter segnis (strain ATCC 21756 / DSM 7131 / JCM 7823 / NBRC 15250 / LMG 17158 / TK0059)</name>
    <name type="common">Mycoplana segnis</name>
    <dbReference type="NCBI Taxonomy" id="509190"/>
    <lineage>
        <taxon>Bacteria</taxon>
        <taxon>Pseudomonadati</taxon>
        <taxon>Pseudomonadota</taxon>
        <taxon>Alphaproteobacteria</taxon>
        <taxon>Caulobacterales</taxon>
        <taxon>Caulobacteraceae</taxon>
        <taxon>Caulobacter</taxon>
    </lineage>
</organism>
<name>RUTC_CAUST</name>
<proteinExistence type="inferred from homology"/>
<keyword id="KW-0378">Hydrolase</keyword>
<accession>D5VGV2</accession>
<reference key="1">
    <citation type="journal article" date="2011" name="J. Bacteriol.">
        <title>Genome sequences of eight morphologically diverse alphaproteobacteria.</title>
        <authorList>
            <consortium name="US DOE Joint Genome Institute"/>
            <person name="Brown P.J."/>
            <person name="Kysela D.T."/>
            <person name="Buechlein A."/>
            <person name="Hemmerich C."/>
            <person name="Brun Y.V."/>
        </authorList>
    </citation>
    <scope>NUCLEOTIDE SEQUENCE [LARGE SCALE GENOMIC DNA]</scope>
    <source>
        <strain>ATCC 21756 / DSM 7131 / JCM 7823 / NBRC 15250 / LMG 17158 / TK0059</strain>
    </source>
</reference>
<dbReference type="EC" id="3.5.-.-" evidence="1"/>
<dbReference type="EMBL" id="CP002008">
    <property type="protein sequence ID" value="ADG10545.1"/>
    <property type="molecule type" value="Genomic_DNA"/>
</dbReference>
<dbReference type="RefSeq" id="WP_013079200.1">
    <property type="nucleotide sequence ID" value="NC_014100.1"/>
</dbReference>
<dbReference type="SMR" id="D5VGV2"/>
<dbReference type="STRING" id="509190.Cseg_2079"/>
<dbReference type="KEGG" id="cse:Cseg_2079"/>
<dbReference type="eggNOG" id="COG0251">
    <property type="taxonomic scope" value="Bacteria"/>
</dbReference>
<dbReference type="HOGENOM" id="CLU_100715_7_3_5"/>
<dbReference type="Proteomes" id="UP000002629">
    <property type="component" value="Chromosome"/>
</dbReference>
<dbReference type="GO" id="GO:0005829">
    <property type="term" value="C:cytosol"/>
    <property type="evidence" value="ECO:0007669"/>
    <property type="project" value="TreeGrafter"/>
</dbReference>
<dbReference type="GO" id="GO:0019239">
    <property type="term" value="F:deaminase activity"/>
    <property type="evidence" value="ECO:0007669"/>
    <property type="project" value="TreeGrafter"/>
</dbReference>
<dbReference type="GO" id="GO:0019740">
    <property type="term" value="P:nitrogen utilization"/>
    <property type="evidence" value="ECO:0007669"/>
    <property type="project" value="UniProtKB-UniRule"/>
</dbReference>
<dbReference type="GO" id="GO:0006212">
    <property type="term" value="P:uracil catabolic process"/>
    <property type="evidence" value="ECO:0007669"/>
    <property type="project" value="UniProtKB-UniRule"/>
</dbReference>
<dbReference type="CDD" id="cd00448">
    <property type="entry name" value="YjgF_YER057c_UK114_family"/>
    <property type="match status" value="1"/>
</dbReference>
<dbReference type="Gene3D" id="3.30.1330.40">
    <property type="entry name" value="RutC-like"/>
    <property type="match status" value="1"/>
</dbReference>
<dbReference type="HAMAP" id="MF_00831">
    <property type="entry name" value="RutC"/>
    <property type="match status" value="1"/>
</dbReference>
<dbReference type="InterPro" id="IPR019898">
    <property type="entry name" value="RutC"/>
</dbReference>
<dbReference type="InterPro" id="IPR035959">
    <property type="entry name" value="RutC-like_sf"/>
</dbReference>
<dbReference type="InterPro" id="IPR006175">
    <property type="entry name" value="YjgF/YER057c/UK114"/>
</dbReference>
<dbReference type="NCBIfam" id="TIGR03610">
    <property type="entry name" value="RutC"/>
    <property type="match status" value="1"/>
</dbReference>
<dbReference type="PANTHER" id="PTHR11803">
    <property type="entry name" value="2-IMINOBUTANOATE/2-IMINOPROPANOATE DEAMINASE RIDA"/>
    <property type="match status" value="1"/>
</dbReference>
<dbReference type="PANTHER" id="PTHR11803:SF58">
    <property type="entry name" value="PROTEIN HMF1-RELATED"/>
    <property type="match status" value="1"/>
</dbReference>
<dbReference type="Pfam" id="PF01042">
    <property type="entry name" value="Ribonuc_L-PSP"/>
    <property type="match status" value="1"/>
</dbReference>
<dbReference type="SUPFAM" id="SSF55298">
    <property type="entry name" value="YjgF-like"/>
    <property type="match status" value="1"/>
</dbReference>
<feature type="chain" id="PRO_0000402715" description="3-aminoacrylate deaminase RutC">
    <location>
        <begin position="1"/>
        <end position="129"/>
    </location>
</feature>
<gene>
    <name evidence="1" type="primary">rutC</name>
    <name type="ordered locus">Cseg_2079</name>
</gene>